<keyword id="KW-0030">Aminoacyl-tRNA synthetase</keyword>
<keyword id="KW-0067">ATP-binding</keyword>
<keyword id="KW-0963">Cytoplasm</keyword>
<keyword id="KW-0436">Ligase</keyword>
<keyword id="KW-0460">Magnesium</keyword>
<keyword id="KW-0479">Metal-binding</keyword>
<keyword id="KW-0547">Nucleotide-binding</keyword>
<keyword id="KW-0648">Protein biosynthesis</keyword>
<sequence length="361" mass="41196">MSDIERLEQEIFLALEAACDEQELEAVRVAALGKKGSISERLKALGNISADERLKVGPALNELKKRILELLAQKRDIFKRQATALRLSKERVDVTLPVRSSPVERGRIHPISQVIDELIAIYADMGFSIAEGPDIETDYYNFTALNFPEGHPAREMHDTFFFSEDATGNRKVLRTHTSPVQIRVMEKKQAPIRIIIPGKTYRMDSDATHSPMFHQVEGLVIDKTSNIAHMMWLHETFCKAFFEVPSVKMRFRPSFFPFTEPSMEVDIQCDRSGSEVKFGEGHDWLEILGCGMVHPQVLKNVGFDPDEYQGFAWGMGIDRIAMLKYGMPDLRAFFDADLRWLDHYGFRCFDISTLFSRLGNV</sequence>
<reference key="1">
    <citation type="submission" date="2006-12" db="EMBL/GenBank/DDBJ databases">
        <authorList>
            <person name="Hendrix L."/>
            <person name="Mohamoud Y."/>
            <person name="Radune D."/>
            <person name="Shvartsbeyn A."/>
            <person name="Daugherty S."/>
            <person name="Dodson R."/>
            <person name="Durkin A.S."/>
            <person name="Harkins D."/>
            <person name="Huot H."/>
            <person name="Kothari S.P."/>
            <person name="Madupu R."/>
            <person name="Li J."/>
            <person name="Nelson W.C."/>
            <person name="Shrivastava S."/>
            <person name="Giglio M.G."/>
            <person name="Haft D."/>
            <person name="Selengut J."/>
            <person name="Fraser-Ligget C."/>
            <person name="Seshadri R."/>
        </authorList>
    </citation>
    <scope>NUCLEOTIDE SEQUENCE [LARGE SCALE GENOMIC DNA]</scope>
    <source>
        <strain>ATCC 35685 / KC583 / Herrer 020/F12,63</strain>
    </source>
</reference>
<name>SYFA_BARBK</name>
<evidence type="ECO:0000255" key="1">
    <source>
        <dbReference type="HAMAP-Rule" id="MF_00281"/>
    </source>
</evidence>
<organism>
    <name type="scientific">Bartonella bacilliformis (strain ATCC 35685 / KC583 / Herrer 020/F12,63)</name>
    <dbReference type="NCBI Taxonomy" id="360095"/>
    <lineage>
        <taxon>Bacteria</taxon>
        <taxon>Pseudomonadati</taxon>
        <taxon>Pseudomonadota</taxon>
        <taxon>Alphaproteobacteria</taxon>
        <taxon>Hyphomicrobiales</taxon>
        <taxon>Bartonellaceae</taxon>
        <taxon>Bartonella</taxon>
    </lineage>
</organism>
<proteinExistence type="inferred from homology"/>
<gene>
    <name evidence="1" type="primary">pheS</name>
    <name type="ordered locus">BARBAKC583_1313</name>
</gene>
<dbReference type="EC" id="6.1.1.20" evidence="1"/>
<dbReference type="EMBL" id="CP000524">
    <property type="protein sequence ID" value="ABM44641.1"/>
    <property type="molecule type" value="Genomic_DNA"/>
</dbReference>
<dbReference type="RefSeq" id="WP_005768098.1">
    <property type="nucleotide sequence ID" value="NC_008783.1"/>
</dbReference>
<dbReference type="SMR" id="A1UUA8"/>
<dbReference type="STRING" id="360095.BARBAKC583_1313"/>
<dbReference type="GeneID" id="4683823"/>
<dbReference type="KEGG" id="bbk:BARBAKC583_1313"/>
<dbReference type="PATRIC" id="fig|360095.6.peg.1285"/>
<dbReference type="eggNOG" id="COG0016">
    <property type="taxonomic scope" value="Bacteria"/>
</dbReference>
<dbReference type="HOGENOM" id="CLU_025086_0_1_5"/>
<dbReference type="OrthoDB" id="9800719at2"/>
<dbReference type="Proteomes" id="UP000000643">
    <property type="component" value="Chromosome"/>
</dbReference>
<dbReference type="GO" id="GO:0005737">
    <property type="term" value="C:cytoplasm"/>
    <property type="evidence" value="ECO:0007669"/>
    <property type="project" value="UniProtKB-SubCell"/>
</dbReference>
<dbReference type="GO" id="GO:0005524">
    <property type="term" value="F:ATP binding"/>
    <property type="evidence" value="ECO:0007669"/>
    <property type="project" value="UniProtKB-UniRule"/>
</dbReference>
<dbReference type="GO" id="GO:0000287">
    <property type="term" value="F:magnesium ion binding"/>
    <property type="evidence" value="ECO:0007669"/>
    <property type="project" value="UniProtKB-UniRule"/>
</dbReference>
<dbReference type="GO" id="GO:0004826">
    <property type="term" value="F:phenylalanine-tRNA ligase activity"/>
    <property type="evidence" value="ECO:0007669"/>
    <property type="project" value="UniProtKB-UniRule"/>
</dbReference>
<dbReference type="GO" id="GO:0000049">
    <property type="term" value="F:tRNA binding"/>
    <property type="evidence" value="ECO:0007669"/>
    <property type="project" value="InterPro"/>
</dbReference>
<dbReference type="GO" id="GO:0006432">
    <property type="term" value="P:phenylalanyl-tRNA aminoacylation"/>
    <property type="evidence" value="ECO:0007669"/>
    <property type="project" value="UniProtKB-UniRule"/>
</dbReference>
<dbReference type="CDD" id="cd00496">
    <property type="entry name" value="PheRS_alpha_core"/>
    <property type="match status" value="1"/>
</dbReference>
<dbReference type="FunFam" id="3.30.930.10:FF:000003">
    <property type="entry name" value="Phenylalanine--tRNA ligase alpha subunit"/>
    <property type="match status" value="1"/>
</dbReference>
<dbReference type="Gene3D" id="3.30.930.10">
    <property type="entry name" value="Bira Bifunctional Protein, Domain 2"/>
    <property type="match status" value="1"/>
</dbReference>
<dbReference type="HAMAP" id="MF_00281">
    <property type="entry name" value="Phe_tRNA_synth_alpha1"/>
    <property type="match status" value="1"/>
</dbReference>
<dbReference type="InterPro" id="IPR006195">
    <property type="entry name" value="aa-tRNA-synth_II"/>
</dbReference>
<dbReference type="InterPro" id="IPR045864">
    <property type="entry name" value="aa-tRNA-synth_II/BPL/LPL"/>
</dbReference>
<dbReference type="InterPro" id="IPR004529">
    <property type="entry name" value="Phe-tRNA-synth_IIc_asu"/>
</dbReference>
<dbReference type="InterPro" id="IPR004188">
    <property type="entry name" value="Phe-tRNA_ligase_II_N"/>
</dbReference>
<dbReference type="InterPro" id="IPR022911">
    <property type="entry name" value="Phe_tRNA_ligase_alpha1_bac"/>
</dbReference>
<dbReference type="InterPro" id="IPR002319">
    <property type="entry name" value="Phenylalanyl-tRNA_Synthase"/>
</dbReference>
<dbReference type="InterPro" id="IPR010978">
    <property type="entry name" value="tRNA-bd_arm"/>
</dbReference>
<dbReference type="NCBIfam" id="TIGR00468">
    <property type="entry name" value="pheS"/>
    <property type="match status" value="1"/>
</dbReference>
<dbReference type="PANTHER" id="PTHR11538:SF41">
    <property type="entry name" value="PHENYLALANINE--TRNA LIGASE, MITOCHONDRIAL"/>
    <property type="match status" value="1"/>
</dbReference>
<dbReference type="PANTHER" id="PTHR11538">
    <property type="entry name" value="PHENYLALANYL-TRNA SYNTHETASE"/>
    <property type="match status" value="1"/>
</dbReference>
<dbReference type="Pfam" id="PF02912">
    <property type="entry name" value="Phe_tRNA-synt_N"/>
    <property type="match status" value="1"/>
</dbReference>
<dbReference type="Pfam" id="PF01409">
    <property type="entry name" value="tRNA-synt_2d"/>
    <property type="match status" value="1"/>
</dbReference>
<dbReference type="SUPFAM" id="SSF55681">
    <property type="entry name" value="Class II aaRS and biotin synthetases"/>
    <property type="match status" value="1"/>
</dbReference>
<dbReference type="SUPFAM" id="SSF46589">
    <property type="entry name" value="tRNA-binding arm"/>
    <property type="match status" value="1"/>
</dbReference>
<dbReference type="PROSITE" id="PS50862">
    <property type="entry name" value="AA_TRNA_LIGASE_II"/>
    <property type="match status" value="1"/>
</dbReference>
<accession>A1UUA8</accession>
<comment type="catalytic activity">
    <reaction evidence="1">
        <text>tRNA(Phe) + L-phenylalanine + ATP = L-phenylalanyl-tRNA(Phe) + AMP + diphosphate + H(+)</text>
        <dbReference type="Rhea" id="RHEA:19413"/>
        <dbReference type="Rhea" id="RHEA-COMP:9668"/>
        <dbReference type="Rhea" id="RHEA-COMP:9699"/>
        <dbReference type="ChEBI" id="CHEBI:15378"/>
        <dbReference type="ChEBI" id="CHEBI:30616"/>
        <dbReference type="ChEBI" id="CHEBI:33019"/>
        <dbReference type="ChEBI" id="CHEBI:58095"/>
        <dbReference type="ChEBI" id="CHEBI:78442"/>
        <dbReference type="ChEBI" id="CHEBI:78531"/>
        <dbReference type="ChEBI" id="CHEBI:456215"/>
        <dbReference type="EC" id="6.1.1.20"/>
    </reaction>
</comment>
<comment type="cofactor">
    <cofactor evidence="1">
        <name>Mg(2+)</name>
        <dbReference type="ChEBI" id="CHEBI:18420"/>
    </cofactor>
    <text evidence="1">Binds 2 magnesium ions per tetramer.</text>
</comment>
<comment type="subunit">
    <text evidence="1">Tetramer of two alpha and two beta subunits.</text>
</comment>
<comment type="subcellular location">
    <subcellularLocation>
        <location evidence="1">Cytoplasm</location>
    </subcellularLocation>
</comment>
<comment type="similarity">
    <text evidence="1">Belongs to the class-II aminoacyl-tRNA synthetase family. Phe-tRNA synthetase alpha subunit type 1 subfamily.</text>
</comment>
<protein>
    <recommendedName>
        <fullName evidence="1">Phenylalanine--tRNA ligase alpha subunit</fullName>
        <ecNumber evidence="1">6.1.1.20</ecNumber>
    </recommendedName>
    <alternativeName>
        <fullName evidence="1">Phenylalanyl-tRNA synthetase alpha subunit</fullName>
        <shortName evidence="1">PheRS</shortName>
    </alternativeName>
</protein>
<feature type="chain" id="PRO_1000006800" description="Phenylalanine--tRNA ligase alpha subunit">
    <location>
        <begin position="1"/>
        <end position="361"/>
    </location>
</feature>
<feature type="binding site" evidence="1">
    <location>
        <position position="260"/>
    </location>
    <ligand>
        <name>Mg(2+)</name>
        <dbReference type="ChEBI" id="CHEBI:18420"/>
        <note>shared with beta subunit</note>
    </ligand>
</feature>